<accession>Q9S795</accession>
<accession>Q56ZQ8</accession>
<gene>
    <name evidence="10" type="primary">ALDH10A8</name>
    <name evidence="12" type="ordered locus">At1g74920</name>
    <name evidence="13" type="ORF">F25A4.11</name>
    <name evidence="14" type="ORF">F9E10.23</name>
</gene>
<comment type="function">
    <text evidence="7 8 9 11">Dehydrogenase that catalyzes the oxidation of several aminoaldehydes (PubMed:27725774, PubMed:32845293). Metabolizes and detoxifies aldehyde products of polyamine degradation to non-toxic amino acids (Probable). Catalyzes the oxidation of 4-aminobutanal and 3-aminopropanal to 4-aminobutanoate and beta-alanine, respectively (PubMed:27725774, PubMed:32845293). Production of 4-aminobutinoate by ALDH10A8 may confer tolerance to salt stress (PubMed:27725774). Catalyzes the oxidation of 4-(trimethylamino)butanal and 4-guanidinobutanal to 4-trimethylammoniobutanoate and 4-guanidinobutanoate, respectively (PubMed:32845293). Involved in glycine betaine biosynthesis (PubMed:26169197, PubMed:27725774, PubMed:32845293). Catalyzes with low efficiency the oxidation of betaine aldehyde to glycine betaine (PubMed:27725774, PubMed:32845293).</text>
</comment>
<comment type="catalytic activity">
    <reaction evidence="8 9">
        <text>4-aminobutanal + NAD(+) + H2O = 4-aminobutanoate + NADH + 2 H(+)</text>
        <dbReference type="Rhea" id="RHEA:19105"/>
        <dbReference type="ChEBI" id="CHEBI:15377"/>
        <dbReference type="ChEBI" id="CHEBI:15378"/>
        <dbReference type="ChEBI" id="CHEBI:57540"/>
        <dbReference type="ChEBI" id="CHEBI:57945"/>
        <dbReference type="ChEBI" id="CHEBI:58264"/>
        <dbReference type="ChEBI" id="CHEBI:59888"/>
        <dbReference type="EC" id="1.2.1.19"/>
    </reaction>
    <physiologicalReaction direction="left-to-right" evidence="8 9">
        <dbReference type="Rhea" id="RHEA:19106"/>
    </physiologicalReaction>
</comment>
<comment type="catalytic activity">
    <reaction evidence="8 9">
        <text>3-aminopropanal + NAD(+) + H2O = beta-alanine + NADH + 2 H(+)</text>
        <dbReference type="Rhea" id="RHEA:30695"/>
        <dbReference type="ChEBI" id="CHEBI:15377"/>
        <dbReference type="ChEBI" id="CHEBI:15378"/>
        <dbReference type="ChEBI" id="CHEBI:57540"/>
        <dbReference type="ChEBI" id="CHEBI:57945"/>
        <dbReference type="ChEBI" id="CHEBI:57966"/>
        <dbReference type="ChEBI" id="CHEBI:58374"/>
    </reaction>
    <physiologicalReaction direction="left-to-right" evidence="8 9">
        <dbReference type="Rhea" id="RHEA:30696"/>
    </physiologicalReaction>
</comment>
<comment type="catalytic activity">
    <reaction evidence="9">
        <text>4-(trimethylamino)butanal + NAD(+) + H2O = 4-(trimethylamino)butanoate + NADH + 2 H(+)</text>
        <dbReference type="Rhea" id="RHEA:17985"/>
        <dbReference type="ChEBI" id="CHEBI:15377"/>
        <dbReference type="ChEBI" id="CHEBI:15378"/>
        <dbReference type="ChEBI" id="CHEBI:16244"/>
        <dbReference type="ChEBI" id="CHEBI:18020"/>
        <dbReference type="ChEBI" id="CHEBI:57540"/>
        <dbReference type="ChEBI" id="CHEBI:57945"/>
        <dbReference type="EC" id="1.2.1.47"/>
    </reaction>
    <physiologicalReaction direction="left-to-right" evidence="9">
        <dbReference type="Rhea" id="RHEA:17986"/>
    </physiologicalReaction>
</comment>
<comment type="catalytic activity">
    <reaction evidence="9">
        <text>4-guanidinobutanal + NAD(+) + H2O = 4-guanidinobutanoate + NADH + 2 H(+)</text>
        <dbReference type="Rhea" id="RHEA:14381"/>
        <dbReference type="ChEBI" id="CHEBI:15377"/>
        <dbReference type="ChEBI" id="CHEBI:15378"/>
        <dbReference type="ChEBI" id="CHEBI:57486"/>
        <dbReference type="ChEBI" id="CHEBI:57540"/>
        <dbReference type="ChEBI" id="CHEBI:57854"/>
        <dbReference type="ChEBI" id="CHEBI:57945"/>
        <dbReference type="EC" id="1.2.1.54"/>
    </reaction>
    <physiologicalReaction direction="left-to-right" evidence="9">
        <dbReference type="Rhea" id="RHEA:14382"/>
    </physiologicalReaction>
</comment>
<comment type="catalytic activity">
    <reaction evidence="8">
        <text>betaine aldehyde + NAD(+) + H2O = glycine betaine + NADH + 2 H(+)</text>
        <dbReference type="Rhea" id="RHEA:15305"/>
        <dbReference type="ChEBI" id="CHEBI:15377"/>
        <dbReference type="ChEBI" id="CHEBI:15378"/>
        <dbReference type="ChEBI" id="CHEBI:15710"/>
        <dbReference type="ChEBI" id="CHEBI:17750"/>
        <dbReference type="ChEBI" id="CHEBI:57540"/>
        <dbReference type="ChEBI" id="CHEBI:57945"/>
        <dbReference type="EC" id="1.2.1.8"/>
    </reaction>
    <physiologicalReaction direction="left-to-right" evidence="8">
        <dbReference type="Rhea" id="RHEA:15306"/>
    </physiologicalReaction>
</comment>
<comment type="biophysicochemical properties">
    <kinetics>
        <KM evidence="8">25.1 uM for 4-aminobutanal</KM>
        <KM evidence="9">19 uM for 4-aminobutanal</KM>
        <KM evidence="8">14.4 uM for 3-aminopropanal</KM>
        <KM evidence="9">2 uM for 3-aminopropanal</KM>
        <KM evidence="9">15 uM for 4-(trimethylamino)butanal</KM>
        <KM evidence="9">4 uM for 4-guanidinobutanal</KM>
        <KM evidence="8">20.8 uM for NAD(+) with 4-aminobutanal as substrate</KM>
        <KM evidence="8">13.2 uM for NAD(+) with 3-aminopropanal as substrate</KM>
        <KM evidence="9">16 uM for NAD(+) with 3-aminopropanal as substrate</KM>
        <Vmax evidence="8">1.6 umol/min/mg enzyme with 4-aminobutanal as substrate</Vmax>
        <Vmax evidence="8">15.8 umol/min/mg enzyme with 3-aminopropanal as substrate</Vmax>
        <Vmax evidence="8">0.8 umol/min/mg enzyme toward NAD(+) in presence of 4-aminobutanal</Vmax>
        <Vmax evidence="8">3.6 umol/min/mg enzyme toward NAD(+) in presence of 3-aminopropanal</Vmax>
    </kinetics>
    <phDependence>
        <text evidence="8">Optimum pH is 10.75 with 4-aminobutanal as substrate. Optimum pH is 10.5 with 3-aminopropanal as substrate.</text>
    </phDependence>
</comment>
<comment type="pathway">
    <text evidence="11">Amine and polyamine biosynthesis; betaine biosynthesis via choline pathway; betaine from betaine aldehyde: step 1/1.</text>
</comment>
<comment type="subunit">
    <text evidence="1">Homodimer.</text>
</comment>
<comment type="subcellular location">
    <subcellularLocation>
        <location evidence="6 8">Cytoplasm</location>
    </subcellularLocation>
    <subcellularLocation>
        <location evidence="8">Plastid</location>
        <location evidence="8">Chloroplast</location>
    </subcellularLocation>
    <text evidence="6">Localizes in small organelles that may be leucoplasts.</text>
</comment>
<comment type="alternative products">
    <event type="alternative splicing"/>
    <isoform>
        <id>Q9S795-1</id>
        <name>1</name>
        <sequence type="displayed"/>
    </isoform>
    <text>A number of isoforms are produced. According to EST sequences.</text>
</comment>
<comment type="tissue specificity">
    <text evidence="9">Widely expressed.</text>
</comment>
<comment type="disruption phenotype">
    <text evidence="6 8">No visible phenotype under normal growth conditions (PubMed:21053011, PubMed:27725774). Mutant seedlings exhibit increased sensitivity to salt stress (PubMed:21053011, PubMed:27725774). Mutant seedling exhibit increased sensitivity to drought stress (PubMed:21053011).</text>
</comment>
<comment type="similarity">
    <text evidence="11">Belongs to the aldehyde dehydrogenase family.</text>
</comment>
<feature type="chain" id="PRO_0000007179" description="Aminoaldehyde dehydrogenase ALDH10A8, chloroplastic">
    <location>
        <begin position="1"/>
        <end position="501"/>
    </location>
</feature>
<feature type="active site" description="Proton acceptor" evidence="4 5">
    <location>
        <position position="260"/>
    </location>
</feature>
<feature type="active site" description="Nucleophile" evidence="4 5">
    <location>
        <position position="294"/>
    </location>
</feature>
<feature type="binding site" evidence="3">
    <location>
        <position position="99"/>
    </location>
    <ligand>
        <name>Na(+)</name>
        <dbReference type="ChEBI" id="CHEBI:29101"/>
    </ligand>
</feature>
<feature type="binding site" evidence="3">
    <location>
        <position position="189"/>
    </location>
    <ligand>
        <name>Na(+)</name>
        <dbReference type="ChEBI" id="CHEBI:29101"/>
    </ligand>
</feature>
<feature type="binding site" evidence="3">
    <location>
        <begin position="238"/>
        <end position="245"/>
    </location>
    <ligand>
        <name>NAD(+)</name>
        <dbReference type="ChEBI" id="CHEBI:57540"/>
    </ligand>
</feature>
<feature type="binding site" evidence="1">
    <location>
        <begin position="238"/>
        <end position="243"/>
    </location>
    <ligand>
        <name>NAD(+)</name>
        <dbReference type="ChEBI" id="CHEBI:57540"/>
    </ligand>
</feature>
<feature type="binding site" evidence="3">
    <location>
        <position position="294"/>
    </location>
    <ligand>
        <name>NAD(+)</name>
        <dbReference type="ChEBI" id="CHEBI:57540"/>
    </ligand>
</feature>
<feature type="binding site" evidence="3">
    <location>
        <position position="393"/>
    </location>
    <ligand>
        <name>NAD(+)</name>
        <dbReference type="ChEBI" id="CHEBI:57540"/>
    </ligand>
</feature>
<feature type="site" description="Transition state stabilizer" evidence="2">
    <location>
        <position position="162"/>
    </location>
</feature>
<sequence length="501" mass="54432">MAIPMPTRQLFIDGEWREPILKKRIPIVNPATEEVIGDIPAATTEDVDVAVNAARRALSRNKGKDWAKAPGAVRAKYLRAIAAKVNERKTDLAKLEALDCGKPLDEAVWDMDDVAGCFEFYADLAEGLDAKQKAPVSLPMESFKSYVLKQPLGVVGLITPWNYPLLMAVWKVAPSLAAGCTAILKPSELASVTCLELADICREVGLPPGVLNVLTGFGSEAGAPLASHPGVDKIAFTGSFATGSKVMTAAAQLVKPVSMELGGKSPLIVFDDVDLDKAAEWALFGCFWTNGQICSATSRLLVHESIASEFIEKLVKWSKNIKISDPMEEGCRLGPVVSKGQYEKILKFISTAKSEGATILHGGSRPEHLEKGFFIEPTIITDVTTSMQIWREEVFGPVLCVKTFASEDEAIELANDSHYGLGAAVISNDTERCDRISEAFEAGIVWINCSQPCFTQAPWGGVKRSGFGRELGEWGLDNYLSVKQVTLYTSNDPWGWYKSPN</sequence>
<keyword id="KW-0025">Alternative splicing</keyword>
<keyword id="KW-0150">Chloroplast</keyword>
<keyword id="KW-0963">Cytoplasm</keyword>
<keyword id="KW-0479">Metal-binding</keyword>
<keyword id="KW-0520">NAD</keyword>
<keyword id="KW-0560">Oxidoreductase</keyword>
<keyword id="KW-0934">Plastid</keyword>
<keyword id="KW-1185">Reference proteome</keyword>
<keyword id="KW-0915">Sodium</keyword>
<reference key="1">
    <citation type="journal article" date="2000" name="Nature">
        <title>Sequence and analysis of chromosome 1 of the plant Arabidopsis thaliana.</title>
        <authorList>
            <person name="Theologis A."/>
            <person name="Ecker J.R."/>
            <person name="Palm C.J."/>
            <person name="Federspiel N.A."/>
            <person name="Kaul S."/>
            <person name="White O."/>
            <person name="Alonso J."/>
            <person name="Altafi H."/>
            <person name="Araujo R."/>
            <person name="Bowman C.L."/>
            <person name="Brooks S.Y."/>
            <person name="Buehler E."/>
            <person name="Chan A."/>
            <person name="Chao Q."/>
            <person name="Chen H."/>
            <person name="Cheuk R.F."/>
            <person name="Chin C.W."/>
            <person name="Chung M.K."/>
            <person name="Conn L."/>
            <person name="Conway A.B."/>
            <person name="Conway A.R."/>
            <person name="Creasy T.H."/>
            <person name="Dewar K."/>
            <person name="Dunn P."/>
            <person name="Etgu P."/>
            <person name="Feldblyum T.V."/>
            <person name="Feng J.-D."/>
            <person name="Fong B."/>
            <person name="Fujii C.Y."/>
            <person name="Gill J.E."/>
            <person name="Goldsmith A.D."/>
            <person name="Haas B."/>
            <person name="Hansen N.F."/>
            <person name="Hughes B."/>
            <person name="Huizar L."/>
            <person name="Hunter J.L."/>
            <person name="Jenkins J."/>
            <person name="Johnson-Hopson C."/>
            <person name="Khan S."/>
            <person name="Khaykin E."/>
            <person name="Kim C.J."/>
            <person name="Koo H.L."/>
            <person name="Kremenetskaia I."/>
            <person name="Kurtz D.B."/>
            <person name="Kwan A."/>
            <person name="Lam B."/>
            <person name="Langin-Hooper S."/>
            <person name="Lee A."/>
            <person name="Lee J.M."/>
            <person name="Lenz C.A."/>
            <person name="Li J.H."/>
            <person name="Li Y.-P."/>
            <person name="Lin X."/>
            <person name="Liu S.X."/>
            <person name="Liu Z.A."/>
            <person name="Luros J.S."/>
            <person name="Maiti R."/>
            <person name="Marziali A."/>
            <person name="Militscher J."/>
            <person name="Miranda M."/>
            <person name="Nguyen M."/>
            <person name="Nierman W.C."/>
            <person name="Osborne B.I."/>
            <person name="Pai G."/>
            <person name="Peterson J."/>
            <person name="Pham P.K."/>
            <person name="Rizzo M."/>
            <person name="Rooney T."/>
            <person name="Rowley D."/>
            <person name="Sakano H."/>
            <person name="Salzberg S.L."/>
            <person name="Schwartz J.R."/>
            <person name="Shinn P."/>
            <person name="Southwick A.M."/>
            <person name="Sun H."/>
            <person name="Tallon L.J."/>
            <person name="Tambunga G."/>
            <person name="Toriumi M.J."/>
            <person name="Town C.D."/>
            <person name="Utterback T."/>
            <person name="Van Aken S."/>
            <person name="Vaysberg M."/>
            <person name="Vysotskaia V.S."/>
            <person name="Walker M."/>
            <person name="Wu D."/>
            <person name="Yu G."/>
            <person name="Fraser C.M."/>
            <person name="Venter J.C."/>
            <person name="Davis R.W."/>
        </authorList>
    </citation>
    <scope>NUCLEOTIDE SEQUENCE [LARGE SCALE GENOMIC DNA]</scope>
    <source>
        <strain>cv. Columbia</strain>
    </source>
</reference>
<reference key="2">
    <citation type="journal article" date="2017" name="Plant J.">
        <title>Araport11: a complete reannotation of the Arabidopsis thaliana reference genome.</title>
        <authorList>
            <person name="Cheng C.Y."/>
            <person name="Krishnakumar V."/>
            <person name="Chan A.P."/>
            <person name="Thibaud-Nissen F."/>
            <person name="Schobel S."/>
            <person name="Town C.D."/>
        </authorList>
    </citation>
    <scope>GENOME REANNOTATION</scope>
    <source>
        <strain>cv. Columbia</strain>
    </source>
</reference>
<reference key="3">
    <citation type="journal article" date="2003" name="Science">
        <title>Empirical analysis of transcriptional activity in the Arabidopsis genome.</title>
        <authorList>
            <person name="Yamada K."/>
            <person name="Lim J."/>
            <person name="Dale J.M."/>
            <person name="Chen H."/>
            <person name="Shinn P."/>
            <person name="Palm C.J."/>
            <person name="Southwick A.M."/>
            <person name="Wu H.C."/>
            <person name="Kim C.J."/>
            <person name="Nguyen M."/>
            <person name="Pham P.K."/>
            <person name="Cheuk R.F."/>
            <person name="Karlin-Newmann G."/>
            <person name="Liu S.X."/>
            <person name="Lam B."/>
            <person name="Sakano H."/>
            <person name="Wu T."/>
            <person name="Yu G."/>
            <person name="Miranda M."/>
            <person name="Quach H.L."/>
            <person name="Tripp M."/>
            <person name="Chang C.H."/>
            <person name="Lee J.M."/>
            <person name="Toriumi M.J."/>
            <person name="Chan M.M."/>
            <person name="Tang C.C."/>
            <person name="Onodera C.S."/>
            <person name="Deng J.M."/>
            <person name="Akiyama K."/>
            <person name="Ansari Y."/>
            <person name="Arakawa T."/>
            <person name="Banh J."/>
            <person name="Banno F."/>
            <person name="Bowser L."/>
            <person name="Brooks S.Y."/>
            <person name="Carninci P."/>
            <person name="Chao Q."/>
            <person name="Choy N."/>
            <person name="Enju A."/>
            <person name="Goldsmith A.D."/>
            <person name="Gurjal M."/>
            <person name="Hansen N.F."/>
            <person name="Hayashizaki Y."/>
            <person name="Johnson-Hopson C."/>
            <person name="Hsuan V.W."/>
            <person name="Iida K."/>
            <person name="Karnes M."/>
            <person name="Khan S."/>
            <person name="Koesema E."/>
            <person name="Ishida J."/>
            <person name="Jiang P.X."/>
            <person name="Jones T."/>
            <person name="Kawai J."/>
            <person name="Kamiya A."/>
            <person name="Meyers C."/>
            <person name="Nakajima M."/>
            <person name="Narusaka M."/>
            <person name="Seki M."/>
            <person name="Sakurai T."/>
            <person name="Satou M."/>
            <person name="Tamse R."/>
            <person name="Vaysberg M."/>
            <person name="Wallender E.K."/>
            <person name="Wong C."/>
            <person name="Yamamura Y."/>
            <person name="Yuan S."/>
            <person name="Shinozaki K."/>
            <person name="Davis R.W."/>
            <person name="Theologis A."/>
            <person name="Ecker J.R."/>
        </authorList>
    </citation>
    <scope>NUCLEOTIDE SEQUENCE [LARGE SCALE MRNA]</scope>
    <source>
        <strain>cv. Columbia</strain>
    </source>
</reference>
<reference key="4">
    <citation type="submission" date="2002-03" db="EMBL/GenBank/DDBJ databases">
        <title>Full-length cDNA from Arabidopsis thaliana.</title>
        <authorList>
            <person name="Brover V.V."/>
            <person name="Troukhan M.E."/>
            <person name="Alexandrov N.A."/>
            <person name="Lu Y.-P."/>
            <person name="Flavell R.B."/>
            <person name="Feldmann K.A."/>
        </authorList>
    </citation>
    <scope>NUCLEOTIDE SEQUENCE [LARGE SCALE MRNA]</scope>
</reference>
<reference key="5">
    <citation type="submission" date="2005-03" db="EMBL/GenBank/DDBJ databases">
        <title>Large-scale analysis of RIKEN Arabidopsis full-length (RAFL) cDNAs.</title>
        <authorList>
            <person name="Totoki Y."/>
            <person name="Seki M."/>
            <person name="Ishida J."/>
            <person name="Nakajima M."/>
            <person name="Enju A."/>
            <person name="Kamiya A."/>
            <person name="Narusaka M."/>
            <person name="Shin-i T."/>
            <person name="Nakagawa M."/>
            <person name="Sakamoto N."/>
            <person name="Oishi K."/>
            <person name="Kohara Y."/>
            <person name="Kobayashi M."/>
            <person name="Toyoda A."/>
            <person name="Sakaki Y."/>
            <person name="Sakurai T."/>
            <person name="Iida K."/>
            <person name="Akiyama K."/>
            <person name="Satou M."/>
            <person name="Toyoda T."/>
            <person name="Konagaya A."/>
            <person name="Carninci P."/>
            <person name="Kawai J."/>
            <person name="Hayashizaki Y."/>
            <person name="Shinozaki K."/>
        </authorList>
    </citation>
    <scope>NUCLEOTIDE SEQUENCE [LARGE SCALE MRNA] OF 390-501</scope>
    <source>
        <strain>cv. Columbia</strain>
    </source>
</reference>
<reference key="6">
    <citation type="journal article" date="2004" name="Trends Plant Sci.">
        <title>The ALDH gene superfamily of Arabidopsis.</title>
        <authorList>
            <person name="Kirch H.-H."/>
            <person name="Bartels D."/>
            <person name="Wei Y."/>
            <person name="Schnable P.S."/>
            <person name="Wood A.J."/>
        </authorList>
    </citation>
    <scope>NOMENCLATURE</scope>
</reference>
<reference key="7">
    <citation type="journal article" date="2011" name="Planta">
        <title>Betaine aldehyde dehydrogenase genes from Arabidopsis with different sub-cellular localization affect stress responses.</title>
        <authorList>
            <person name="Missihoun T.D."/>
            <person name="Schmitz J."/>
            <person name="Klug R."/>
            <person name="Kirch H.H."/>
            <person name="Bartels D."/>
        </authorList>
    </citation>
    <scope>SUBCELLULAR LOCATION</scope>
    <scope>DISRUPTION PHENOTYPE</scope>
</reference>
<reference key="8">
    <citation type="journal article" date="2015" name="Plant Cell Physiol.">
        <title>Overexpression of ALDH10A8 and ALDH10A9 genes provides insight into their role in glycine betaine synthesis and affects primary metabolism in Arabidopsis thaliana.</title>
        <authorList>
            <person name="Missihoun T.D."/>
            <person name="Willee E."/>
            <person name="Guegan J.P."/>
            <person name="Berardocco S."/>
            <person name="Shafiq M.R."/>
            <person name="Bouchereau A."/>
            <person name="Bartels D."/>
        </authorList>
    </citation>
    <scope>FUNCTION</scope>
</reference>
<reference key="9">
    <citation type="journal article" date="2016" name="Sci. Rep.">
        <title>Arabidopsis aldehyde dehydrogenase 10 family members confer salt tolerance through putrescine-derived 4-aminobutyrate (GABA) production.</title>
        <authorList>
            <person name="Zarei A."/>
            <person name="Trobacher C.P."/>
            <person name="Shelp B.J."/>
        </authorList>
    </citation>
    <scope>FUNCTION</scope>
    <scope>CATALYTIC ACTIVITY</scope>
    <scope>BIOPHYSICOCHEMICAL PROPERTIES</scope>
    <scope>SUBCELLULAR LOCATION</scope>
    <scope>DISRUPTION PHENOTYPE</scope>
</reference>
<reference key="10">
    <citation type="journal article" date="2020" name="J. Exp. Bot.">
        <title>Roles for ALDH10 enzymes in gamma-butyrobetaine synthesis, seed development, germination, and salt tolerance in Arabidopsis.</title>
        <authorList>
            <person name="Jacques F."/>
            <person name="Zhao Y."/>
            <person name="Kopecna M."/>
            <person name="Koncitikova R."/>
            <person name="Kopecny D."/>
            <person name="Rippa S."/>
            <person name="Perrin Y."/>
        </authorList>
    </citation>
    <scope>FUNCTION</scope>
    <scope>CATALYTIC ACTIVITY</scope>
    <scope>BIOPHYSICOCHEMICAL PROPERTIES</scope>
    <scope>TISSUE SPECIFICITY</scope>
    <scope>DISRUPTION PHENOTYPE</scope>
</reference>
<dbReference type="EC" id="1.2.1.-" evidence="8 9"/>
<dbReference type="EC" id="1.2.1.47" evidence="9"/>
<dbReference type="EC" id="1.2.1.19" evidence="8 9"/>
<dbReference type="EC" id="1.2.1.8" evidence="8 9"/>
<dbReference type="EC" id="1.2.1.54" evidence="9"/>
<dbReference type="EMBL" id="AC008263">
    <property type="protein sequence ID" value="AAD55284.1"/>
    <property type="molecule type" value="Genomic_DNA"/>
</dbReference>
<dbReference type="EMBL" id="AC013258">
    <property type="protein sequence ID" value="AAG51938.1"/>
    <property type="molecule type" value="Genomic_DNA"/>
</dbReference>
<dbReference type="EMBL" id="CP002684">
    <property type="protein sequence ID" value="AEE35649.1"/>
    <property type="molecule type" value="Genomic_DNA"/>
</dbReference>
<dbReference type="EMBL" id="AY093071">
    <property type="protein sequence ID" value="AAM13070.1"/>
    <property type="molecule type" value="mRNA"/>
</dbReference>
<dbReference type="EMBL" id="BT008872">
    <property type="protein sequence ID" value="AAP68311.1"/>
    <property type="molecule type" value="mRNA"/>
</dbReference>
<dbReference type="EMBL" id="AY087395">
    <property type="protein sequence ID" value="AAM64944.1"/>
    <property type="molecule type" value="mRNA"/>
</dbReference>
<dbReference type="EMBL" id="AK220905">
    <property type="protein sequence ID" value="BAD94340.1"/>
    <property type="molecule type" value="mRNA"/>
</dbReference>
<dbReference type="PIR" id="H96778">
    <property type="entry name" value="H96778"/>
</dbReference>
<dbReference type="RefSeq" id="NP_565094.1">
    <molecule id="Q9S795-1"/>
    <property type="nucleotide sequence ID" value="NM_106150.4"/>
</dbReference>
<dbReference type="SMR" id="Q9S795"/>
<dbReference type="BioGRID" id="29050">
    <property type="interactions" value="6"/>
</dbReference>
<dbReference type="FunCoup" id="Q9S795">
    <property type="interactions" value="848"/>
</dbReference>
<dbReference type="IntAct" id="Q9S795">
    <property type="interactions" value="1"/>
</dbReference>
<dbReference type="STRING" id="3702.Q9S795"/>
<dbReference type="iPTMnet" id="Q9S795"/>
<dbReference type="PaxDb" id="3702-AT1G74920.1"/>
<dbReference type="ProteomicsDB" id="240844">
    <molecule id="Q9S795-1"/>
</dbReference>
<dbReference type="EnsemblPlants" id="AT1G74920.1">
    <molecule id="Q9S795-1"/>
    <property type="protein sequence ID" value="AT1G74920.1"/>
    <property type="gene ID" value="AT1G74920"/>
</dbReference>
<dbReference type="GeneID" id="843831"/>
<dbReference type="Gramene" id="AT1G74920.1">
    <molecule id="Q9S795-1"/>
    <property type="protein sequence ID" value="AT1G74920.1"/>
    <property type="gene ID" value="AT1G74920"/>
</dbReference>
<dbReference type="KEGG" id="ath:AT1G74920"/>
<dbReference type="Araport" id="AT1G74920"/>
<dbReference type="TAIR" id="AT1G74920">
    <property type="gene designation" value="ALDH10A8"/>
</dbReference>
<dbReference type="eggNOG" id="KOG2450">
    <property type="taxonomic scope" value="Eukaryota"/>
</dbReference>
<dbReference type="InParanoid" id="Q9S795"/>
<dbReference type="OMA" id="PMPIAAW"/>
<dbReference type="OrthoDB" id="310895at2759"/>
<dbReference type="PhylomeDB" id="Q9S795"/>
<dbReference type="BioCyc" id="ARA:AT1G74920-MONOMER"/>
<dbReference type="BRENDA" id="1.2.1.19">
    <property type="organism ID" value="399"/>
</dbReference>
<dbReference type="BRENDA" id="1.2.1.8">
    <property type="organism ID" value="399"/>
</dbReference>
<dbReference type="UniPathway" id="UPA00529">
    <property type="reaction ID" value="UER00386"/>
</dbReference>
<dbReference type="CD-CODE" id="4299E36E">
    <property type="entry name" value="Nucleolus"/>
</dbReference>
<dbReference type="PRO" id="PR:Q9S795"/>
<dbReference type="Proteomes" id="UP000006548">
    <property type="component" value="Chromosome 1"/>
</dbReference>
<dbReference type="ExpressionAtlas" id="Q9S795">
    <property type="expression patterns" value="baseline and differential"/>
</dbReference>
<dbReference type="GO" id="GO:0009507">
    <property type="term" value="C:chloroplast"/>
    <property type="evidence" value="ECO:0007669"/>
    <property type="project" value="UniProtKB-SubCell"/>
</dbReference>
<dbReference type="GO" id="GO:0005829">
    <property type="term" value="C:cytosol"/>
    <property type="evidence" value="ECO:0007005"/>
    <property type="project" value="TAIR"/>
</dbReference>
<dbReference type="GO" id="GO:0009516">
    <property type="term" value="C:leucoplast"/>
    <property type="evidence" value="ECO:0000314"/>
    <property type="project" value="TAIR"/>
</dbReference>
<dbReference type="GO" id="GO:0005739">
    <property type="term" value="C:mitochondrion"/>
    <property type="evidence" value="ECO:0007005"/>
    <property type="project" value="TAIR"/>
</dbReference>
<dbReference type="GO" id="GO:0009505">
    <property type="term" value="C:plant-type cell wall"/>
    <property type="evidence" value="ECO:0007005"/>
    <property type="project" value="TAIR"/>
</dbReference>
<dbReference type="GO" id="GO:0102244">
    <property type="term" value="F:3-aminopropanal dehydrogenase (NAD+) activity"/>
    <property type="evidence" value="ECO:0007669"/>
    <property type="project" value="RHEA"/>
</dbReference>
<dbReference type="GO" id="GO:0047105">
    <property type="term" value="F:4-trimethylammoniobutyraldehyde dehydrogenase activity"/>
    <property type="evidence" value="ECO:0000314"/>
    <property type="project" value="UniProtKB"/>
</dbReference>
<dbReference type="GO" id="GO:0019145">
    <property type="term" value="F:aminobutyraldehyde dehydrogenase (NAD+) activity"/>
    <property type="evidence" value="ECO:0000314"/>
    <property type="project" value="UniProtKB"/>
</dbReference>
<dbReference type="GO" id="GO:0008802">
    <property type="term" value="F:betaine-aldehyde dehydrogenase (NAD+) activity"/>
    <property type="evidence" value="ECO:0000314"/>
    <property type="project" value="UniProtKB"/>
</dbReference>
<dbReference type="GO" id="GO:0047107">
    <property type="term" value="F:gamma-guanidinobutyraldehyde dehydrogenase (NAD+) activity"/>
    <property type="evidence" value="ECO:0000314"/>
    <property type="project" value="UniProtKB"/>
</dbReference>
<dbReference type="GO" id="GO:0031402">
    <property type="term" value="F:sodium ion binding"/>
    <property type="evidence" value="ECO:0000250"/>
    <property type="project" value="UniProtKB"/>
</dbReference>
<dbReference type="GO" id="GO:0110095">
    <property type="term" value="P:cellular detoxification of aldehyde"/>
    <property type="evidence" value="ECO:0000314"/>
    <property type="project" value="UniProtKB"/>
</dbReference>
<dbReference type="GO" id="GO:0019285">
    <property type="term" value="P:glycine betaine biosynthetic process from choline"/>
    <property type="evidence" value="ECO:0000314"/>
    <property type="project" value="UniProtKB"/>
</dbReference>
<dbReference type="GO" id="GO:0009651">
    <property type="term" value="P:response to salt stress"/>
    <property type="evidence" value="ECO:0000315"/>
    <property type="project" value="TAIR"/>
</dbReference>
<dbReference type="GO" id="GO:0009414">
    <property type="term" value="P:response to water deprivation"/>
    <property type="evidence" value="ECO:0000315"/>
    <property type="project" value="TAIR"/>
</dbReference>
<dbReference type="CDD" id="cd07110">
    <property type="entry name" value="ALDH_F10_BADH"/>
    <property type="match status" value="1"/>
</dbReference>
<dbReference type="FunFam" id="3.40.309.10:FF:000012">
    <property type="entry name" value="Betaine aldehyde dehydrogenase"/>
    <property type="match status" value="1"/>
</dbReference>
<dbReference type="FunFam" id="3.40.605.10:FF:000007">
    <property type="entry name" value="NAD/NADP-dependent betaine aldehyde dehydrogenase"/>
    <property type="match status" value="1"/>
</dbReference>
<dbReference type="Gene3D" id="3.40.605.10">
    <property type="entry name" value="Aldehyde Dehydrogenase, Chain A, domain 1"/>
    <property type="match status" value="1"/>
</dbReference>
<dbReference type="Gene3D" id="3.40.309.10">
    <property type="entry name" value="Aldehyde Dehydrogenase, Chain A, domain 2"/>
    <property type="match status" value="1"/>
</dbReference>
<dbReference type="InterPro" id="IPR016161">
    <property type="entry name" value="Ald_DH/histidinol_DH"/>
</dbReference>
<dbReference type="InterPro" id="IPR016163">
    <property type="entry name" value="Ald_DH_C"/>
</dbReference>
<dbReference type="InterPro" id="IPR016160">
    <property type="entry name" value="Ald_DH_CS_CYS"/>
</dbReference>
<dbReference type="InterPro" id="IPR029510">
    <property type="entry name" value="Ald_DH_CS_GLU"/>
</dbReference>
<dbReference type="InterPro" id="IPR016162">
    <property type="entry name" value="Ald_DH_N"/>
</dbReference>
<dbReference type="InterPro" id="IPR015590">
    <property type="entry name" value="Aldehyde_DH_dom"/>
</dbReference>
<dbReference type="PANTHER" id="PTHR43860:SF14">
    <property type="entry name" value="AMINOALDEHYDE DEHYDROGENASE ALDH10A8, CHLOROPLASTIC"/>
    <property type="match status" value="1"/>
</dbReference>
<dbReference type="PANTHER" id="PTHR43860">
    <property type="entry name" value="BETAINE ALDEHYDE DEHYDROGENASE"/>
    <property type="match status" value="1"/>
</dbReference>
<dbReference type="Pfam" id="PF00171">
    <property type="entry name" value="Aldedh"/>
    <property type="match status" value="1"/>
</dbReference>
<dbReference type="SUPFAM" id="SSF53720">
    <property type="entry name" value="ALDH-like"/>
    <property type="match status" value="1"/>
</dbReference>
<dbReference type="PROSITE" id="PS00070">
    <property type="entry name" value="ALDEHYDE_DEHYDR_CYS"/>
    <property type="match status" value="1"/>
</dbReference>
<dbReference type="PROSITE" id="PS00687">
    <property type="entry name" value="ALDEHYDE_DEHYDR_GLU"/>
    <property type="match status" value="1"/>
</dbReference>
<name>BADH1_ARATH</name>
<proteinExistence type="evidence at protein level"/>
<organism>
    <name type="scientific">Arabidopsis thaliana</name>
    <name type="common">Mouse-ear cress</name>
    <dbReference type="NCBI Taxonomy" id="3702"/>
    <lineage>
        <taxon>Eukaryota</taxon>
        <taxon>Viridiplantae</taxon>
        <taxon>Streptophyta</taxon>
        <taxon>Embryophyta</taxon>
        <taxon>Tracheophyta</taxon>
        <taxon>Spermatophyta</taxon>
        <taxon>Magnoliopsida</taxon>
        <taxon>eudicotyledons</taxon>
        <taxon>Gunneridae</taxon>
        <taxon>Pentapetalae</taxon>
        <taxon>rosids</taxon>
        <taxon>malvids</taxon>
        <taxon>Brassicales</taxon>
        <taxon>Brassicaceae</taxon>
        <taxon>Camelineae</taxon>
        <taxon>Arabidopsis</taxon>
    </lineage>
</organism>
<evidence type="ECO:0000250" key="1"/>
<evidence type="ECO:0000250" key="2">
    <source>
        <dbReference type="UniProtKB" id="P20000"/>
    </source>
</evidence>
<evidence type="ECO:0000250" key="3">
    <source>
        <dbReference type="UniProtKB" id="Q8VWZ1"/>
    </source>
</evidence>
<evidence type="ECO:0000255" key="4">
    <source>
        <dbReference type="PROSITE-ProRule" id="PRU10007"/>
    </source>
</evidence>
<evidence type="ECO:0000255" key="5">
    <source>
        <dbReference type="PROSITE-ProRule" id="PRU10008"/>
    </source>
</evidence>
<evidence type="ECO:0000269" key="6">
    <source>
    </source>
</evidence>
<evidence type="ECO:0000269" key="7">
    <source>
    </source>
</evidence>
<evidence type="ECO:0000269" key="8">
    <source>
    </source>
</evidence>
<evidence type="ECO:0000269" key="9">
    <source>
    </source>
</evidence>
<evidence type="ECO:0000303" key="10">
    <source>
    </source>
</evidence>
<evidence type="ECO:0000305" key="11"/>
<evidence type="ECO:0000312" key="12">
    <source>
        <dbReference type="Araport" id="AT1G74920"/>
    </source>
</evidence>
<evidence type="ECO:0000312" key="13">
    <source>
        <dbReference type="EMBL" id="AAD55284.1"/>
    </source>
</evidence>
<evidence type="ECO:0000312" key="14">
    <source>
        <dbReference type="EMBL" id="AAG51938.1"/>
    </source>
</evidence>
<protein>
    <recommendedName>
        <fullName evidence="11">Aminoaldehyde dehydrogenase ALDH10A8, chloroplastic</fullName>
        <ecNumber evidence="8 9">1.2.1.-</ecNumber>
    </recommendedName>
    <alternativeName>
        <fullName evidence="11">4-trimethylammoniobutyraldehyde dehydrogenase ALDH10A8</fullName>
        <ecNumber evidence="9">1.2.1.47</ecNumber>
    </alternativeName>
    <alternativeName>
        <fullName evidence="10">Aldehyde dehydrogenase family 10 member A8</fullName>
    </alternativeName>
    <alternativeName>
        <fullName evidence="11">Aminobutyraldehyde dehydrogenase ALDH10A8</fullName>
        <ecNumber evidence="8 9">1.2.1.19</ecNumber>
    </alternativeName>
    <alternativeName>
        <fullName evidence="11">Betaine aldehyde dehydrogenase ALDH10A8</fullName>
        <ecNumber evidence="8 9">1.2.1.8</ecNumber>
    </alternativeName>
    <alternativeName>
        <fullName evidence="11">Gamma-guanidinobutyraldehyde dehydrogenase ALDH10A8</fullName>
        <ecNumber evidence="9">1.2.1.54</ecNumber>
    </alternativeName>
</protein>